<comment type="function">
    <text evidence="1 2">Promotes the release of ascospores from asci by hydrolyzing 1,3-alpha-glucan in the ascus wall.</text>
</comment>
<comment type="catalytic activity">
    <reaction>
        <text>Endohydrolysis of (1-&gt;3)-alpha-D-glucosidic linkages in isolichenin, pseudonigeran and nigeran.</text>
        <dbReference type="EC" id="3.2.1.59"/>
    </reaction>
</comment>
<comment type="subcellular location">
    <subcellularLocation>
        <location evidence="1 2">Ascus epiplasm</location>
    </subcellularLocation>
</comment>
<comment type="developmental stage">
    <text evidence="2">Present during vegetative growth at low level (at protein level) (PubMed:19542306). The level increases throughout meiosis and reaches its highest during sporulation (at protein level) (PubMed:19542306).</text>
</comment>
<comment type="disruption phenotype">
    <text evidence="2">Abolishes ascospore release from ascus during sporulation.</text>
</comment>
<comment type="similarity">
    <text evidence="3">Belongs to the glycosyl hydrolase 71 family.</text>
</comment>
<name>AGN2_SCHPO</name>
<feature type="chain" id="PRO_0000119035" description="Ascus wall endo-1,3-alpha-glucanase">
    <location>
        <begin position="1"/>
        <end position="433"/>
    </location>
</feature>
<organism>
    <name type="scientific">Schizosaccharomyces pombe (strain 972 / ATCC 24843)</name>
    <name type="common">Fission yeast</name>
    <dbReference type="NCBI Taxonomy" id="284812"/>
    <lineage>
        <taxon>Eukaryota</taxon>
        <taxon>Fungi</taxon>
        <taxon>Dikarya</taxon>
        <taxon>Ascomycota</taxon>
        <taxon>Taphrinomycotina</taxon>
        <taxon>Schizosaccharomycetes</taxon>
        <taxon>Schizosaccharomycetales</taxon>
        <taxon>Schizosaccharomycetaceae</taxon>
        <taxon>Schizosaccharomyces</taxon>
    </lineage>
</organism>
<dbReference type="EC" id="3.2.1.59"/>
<dbReference type="EMBL" id="AY626902">
    <property type="protein sequence ID" value="AAT84065.1"/>
    <property type="molecule type" value="mRNA"/>
</dbReference>
<dbReference type="EMBL" id="CU329671">
    <property type="protein sequence ID" value="CAH58744.1"/>
    <property type="molecule type" value="Genomic_DNA"/>
</dbReference>
<dbReference type="PIR" id="T40582">
    <property type="entry name" value="T40582"/>
</dbReference>
<dbReference type="RefSeq" id="XP_001713124.1">
    <property type="nucleotide sequence ID" value="XM_001713072.2"/>
</dbReference>
<dbReference type="SMR" id="O94510"/>
<dbReference type="BioGRID" id="277637">
    <property type="interactions" value="8"/>
</dbReference>
<dbReference type="STRING" id="284812.O94510"/>
<dbReference type="CAZy" id="GH71">
    <property type="family name" value="Glycoside Hydrolase Family 71"/>
</dbReference>
<dbReference type="PaxDb" id="4896-SPBC646.06c.1"/>
<dbReference type="EnsemblFungi" id="SPBC646.06c.1">
    <property type="protein sequence ID" value="SPBC646.06c.1:pep"/>
    <property type="gene ID" value="SPBC646.06c"/>
</dbReference>
<dbReference type="PomBase" id="SPBC646.06c">
    <property type="gene designation" value="agn2"/>
</dbReference>
<dbReference type="VEuPathDB" id="FungiDB:SPBC646.06c"/>
<dbReference type="eggNOG" id="ENOG502RSZT">
    <property type="taxonomic scope" value="Eukaryota"/>
</dbReference>
<dbReference type="HOGENOM" id="CLU_019141_0_0_1"/>
<dbReference type="InParanoid" id="O94510"/>
<dbReference type="OMA" id="GSNSHEW"/>
<dbReference type="PhylomeDB" id="O94510"/>
<dbReference type="PRO" id="PR:O94510"/>
<dbReference type="Proteomes" id="UP000002485">
    <property type="component" value="Chromosome II"/>
</dbReference>
<dbReference type="GO" id="GO:0072324">
    <property type="term" value="C:ascus epiplasm"/>
    <property type="evidence" value="ECO:0000314"/>
    <property type="project" value="PomBase"/>
</dbReference>
<dbReference type="GO" id="GO:0005829">
    <property type="term" value="C:cytosol"/>
    <property type="evidence" value="ECO:0007005"/>
    <property type="project" value="PomBase"/>
</dbReference>
<dbReference type="GO" id="GO:1990819">
    <property type="term" value="C:mating projection actin fusion focus"/>
    <property type="evidence" value="ECO:0000314"/>
    <property type="project" value="PomBase"/>
</dbReference>
<dbReference type="GO" id="GO:0005634">
    <property type="term" value="C:nucleus"/>
    <property type="evidence" value="ECO:0007005"/>
    <property type="project" value="PomBase"/>
</dbReference>
<dbReference type="GO" id="GO:0051118">
    <property type="term" value="F:glucan endo-1,3-alpha-glucosidase activity"/>
    <property type="evidence" value="ECO:0000314"/>
    <property type="project" value="PomBase"/>
</dbReference>
<dbReference type="GO" id="GO:0071998">
    <property type="term" value="P:ascospore release from ascus"/>
    <property type="evidence" value="ECO:0000314"/>
    <property type="project" value="PomBase"/>
</dbReference>
<dbReference type="GO" id="GO:0051301">
    <property type="term" value="P:cell division"/>
    <property type="evidence" value="ECO:0007669"/>
    <property type="project" value="UniProtKB-KW"/>
</dbReference>
<dbReference type="GO" id="GO:1904541">
    <property type="term" value="P:fungal-type cell wall disassembly involved in conjugation with cellular fusion"/>
    <property type="evidence" value="ECO:0000316"/>
    <property type="project" value="PomBase"/>
</dbReference>
<dbReference type="CDD" id="cd11577">
    <property type="entry name" value="GH71"/>
    <property type="match status" value="1"/>
</dbReference>
<dbReference type="FunFam" id="3.20.20.80:FF:000268">
    <property type="entry name" value="Glucan endo-1,3-alpha-glucosidase agn2"/>
    <property type="match status" value="1"/>
</dbReference>
<dbReference type="Gene3D" id="3.20.20.80">
    <property type="entry name" value="Glycosidases"/>
    <property type="match status" value="1"/>
</dbReference>
<dbReference type="InterPro" id="IPR005197">
    <property type="entry name" value="Glyco_hydro_71"/>
</dbReference>
<dbReference type="Pfam" id="PF03659">
    <property type="entry name" value="Glyco_hydro_71"/>
    <property type="match status" value="1"/>
</dbReference>
<evidence type="ECO:0000269" key="1">
    <source>
    </source>
</evidence>
<evidence type="ECO:0000269" key="2">
    <source>
    </source>
</evidence>
<evidence type="ECO:0000305" key="3"/>
<evidence type="ECO:0000312" key="4">
    <source>
        <dbReference type="PomBase" id="SPBC646.06c"/>
    </source>
</evidence>
<proteinExistence type="evidence at protein level"/>
<protein>
    <recommendedName>
        <fullName>Ascus wall endo-1,3-alpha-glucanase</fullName>
    </recommendedName>
    <alternativeName>
        <fullName>Endo-1,3-alpha-glucanase agn2</fullName>
    </alternativeName>
    <alternativeName>
        <fullName>Glucan endo-1,3-alpha-glucosidase agn2</fullName>
        <ecNumber>3.2.1.59</ecNumber>
    </alternativeName>
</protein>
<accession>O94510</accession>
<accession>Q5ZEQ1</accession>
<reference key="1">
    <citation type="journal article" date="2004" name="Mol. Biol. Cell">
        <title>Role of the alpha-glucanase Agn1p in fission-yeast cell separation.</title>
        <authorList>
            <person name="Dekker N."/>
            <person name="Speijer D."/>
            <person name="Grun C.H."/>
            <person name="Van Den Berg M."/>
            <person name="De Haan A."/>
            <person name="Hochstenbach F."/>
        </authorList>
    </citation>
    <scope>NUCLEOTIDE SEQUENCE [MRNA]</scope>
    <scope>FUNCTION</scope>
    <scope>SUBCELLULAR LOCATION</scope>
    <source>
        <strain>ND080</strain>
    </source>
</reference>
<reference key="2">
    <citation type="journal article" date="2002" name="Nature">
        <title>The genome sequence of Schizosaccharomyces pombe.</title>
        <authorList>
            <person name="Wood V."/>
            <person name="Gwilliam R."/>
            <person name="Rajandream M.A."/>
            <person name="Lyne M.H."/>
            <person name="Lyne R."/>
            <person name="Stewart A."/>
            <person name="Sgouros J.G."/>
            <person name="Peat N."/>
            <person name="Hayles J."/>
            <person name="Baker S.G."/>
            <person name="Basham D."/>
            <person name="Bowman S."/>
            <person name="Brooks K."/>
            <person name="Brown D."/>
            <person name="Brown S."/>
            <person name="Chillingworth T."/>
            <person name="Churcher C.M."/>
            <person name="Collins M."/>
            <person name="Connor R."/>
            <person name="Cronin A."/>
            <person name="Davis P."/>
            <person name="Feltwell T."/>
            <person name="Fraser A."/>
            <person name="Gentles S."/>
            <person name="Goble A."/>
            <person name="Hamlin N."/>
            <person name="Harris D.E."/>
            <person name="Hidalgo J."/>
            <person name="Hodgson G."/>
            <person name="Holroyd S."/>
            <person name="Hornsby T."/>
            <person name="Howarth S."/>
            <person name="Huckle E.J."/>
            <person name="Hunt S."/>
            <person name="Jagels K."/>
            <person name="James K.D."/>
            <person name="Jones L."/>
            <person name="Jones M."/>
            <person name="Leather S."/>
            <person name="McDonald S."/>
            <person name="McLean J."/>
            <person name="Mooney P."/>
            <person name="Moule S."/>
            <person name="Mungall K.L."/>
            <person name="Murphy L.D."/>
            <person name="Niblett D."/>
            <person name="Odell C."/>
            <person name="Oliver K."/>
            <person name="O'Neil S."/>
            <person name="Pearson D."/>
            <person name="Quail M.A."/>
            <person name="Rabbinowitsch E."/>
            <person name="Rutherford K.M."/>
            <person name="Rutter S."/>
            <person name="Saunders D."/>
            <person name="Seeger K."/>
            <person name="Sharp S."/>
            <person name="Skelton J."/>
            <person name="Simmonds M.N."/>
            <person name="Squares R."/>
            <person name="Squares S."/>
            <person name="Stevens K."/>
            <person name="Taylor K."/>
            <person name="Taylor R.G."/>
            <person name="Tivey A."/>
            <person name="Walsh S.V."/>
            <person name="Warren T."/>
            <person name="Whitehead S."/>
            <person name="Woodward J.R."/>
            <person name="Volckaert G."/>
            <person name="Aert R."/>
            <person name="Robben J."/>
            <person name="Grymonprez B."/>
            <person name="Weltjens I."/>
            <person name="Vanstreels E."/>
            <person name="Rieger M."/>
            <person name="Schaefer M."/>
            <person name="Mueller-Auer S."/>
            <person name="Gabel C."/>
            <person name="Fuchs M."/>
            <person name="Duesterhoeft A."/>
            <person name="Fritzc C."/>
            <person name="Holzer E."/>
            <person name="Moestl D."/>
            <person name="Hilbert H."/>
            <person name="Borzym K."/>
            <person name="Langer I."/>
            <person name="Beck A."/>
            <person name="Lehrach H."/>
            <person name="Reinhardt R."/>
            <person name="Pohl T.M."/>
            <person name="Eger P."/>
            <person name="Zimmermann W."/>
            <person name="Wedler H."/>
            <person name="Wambutt R."/>
            <person name="Purnelle B."/>
            <person name="Goffeau A."/>
            <person name="Cadieu E."/>
            <person name="Dreano S."/>
            <person name="Gloux S."/>
            <person name="Lelaure V."/>
            <person name="Mottier S."/>
            <person name="Galibert F."/>
            <person name="Aves S.J."/>
            <person name="Xiang Z."/>
            <person name="Hunt C."/>
            <person name="Moore K."/>
            <person name="Hurst S.M."/>
            <person name="Lucas M."/>
            <person name="Rochet M."/>
            <person name="Gaillardin C."/>
            <person name="Tallada V.A."/>
            <person name="Garzon A."/>
            <person name="Thode G."/>
            <person name="Daga R.R."/>
            <person name="Cruzado L."/>
            <person name="Jimenez J."/>
            <person name="Sanchez M."/>
            <person name="del Rey F."/>
            <person name="Benito J."/>
            <person name="Dominguez A."/>
            <person name="Revuelta J.L."/>
            <person name="Moreno S."/>
            <person name="Armstrong J."/>
            <person name="Forsburg S.L."/>
            <person name="Cerutti L."/>
            <person name="Lowe T."/>
            <person name="McCombie W.R."/>
            <person name="Paulsen I."/>
            <person name="Potashkin J."/>
            <person name="Shpakovski G.V."/>
            <person name="Ussery D."/>
            <person name="Barrell B.G."/>
            <person name="Nurse P."/>
        </authorList>
    </citation>
    <scope>NUCLEOTIDE SEQUENCE [LARGE SCALE GENOMIC DNA]</scope>
    <source>
        <strain>972 / ATCC 24843</strain>
    </source>
</reference>
<reference key="3">
    <citation type="journal article" date="2009" name="Eukaryot. Cell">
        <title>{beta}-glucanase Eng2 is required for ascus wall endolysis after sporulation in the fission yeast Schizosaccharomyces pombe.</title>
        <authorList>
            <person name="Encinar del Dedo J."/>
            <person name="Duenas E."/>
            <person name="Arnaiz Y."/>
            <person name="del Rey F."/>
            <person name="Vazquez de Aldana C.R."/>
        </authorList>
    </citation>
    <scope>FUNCTION</scope>
    <scope>SUBCELLULAR LOCATION</scope>
    <scope>DEVELOPMENTAL STAGE</scope>
    <scope>DISRUPTION PHENOTYPE</scope>
</reference>
<sequence length="433" mass="48066">MASLTTALPNKAVVAHFMMGLTYNYAQSDFQNDIQNAISLGLDGFVLNFGNDSWMMSKLTLMYNAADALNLQFLLYLNLDMSEMSTVPASTLVTYVQTFANRGHQARINNNVVVGTFLGQDINFGQSSVNQGWQVAFKNALASAGINIFFMPTWPLDASTIYQTYPVADGFCKWNCWPYYTSSPTSDAEDLVYIQNSKATNKKYMATVSPIFYTHFTSKNYSFFSEGLWFTRWMQLIKDQPNYVQVLTWNDYGESTYIGPTNYAADFPVIGSNSHEWVDSFTHAPLSYSLPLFIQMYKQNTTGLPSNFSGISQLYVTYRVHSKNATASSDSIPRPDNYQNSSDVISVISFAKSSYTLRVSVNGTVLGTTNVNAGVQSANVSFIVNNTAAAGLPLFQILNGTTVIAQGYGPLNILGNNSVVLYNFNFCTTRISW</sequence>
<keyword id="KW-0131">Cell cycle</keyword>
<keyword id="KW-0132">Cell division</keyword>
<keyword id="KW-0326">Glycosidase</keyword>
<keyword id="KW-0378">Hydrolase</keyword>
<keyword id="KW-1185">Reference proteome</keyword>
<gene>
    <name evidence="4" type="primary">agn2</name>
    <name evidence="4" type="ORF">SPBC646.06c</name>
</gene>